<comment type="function">
    <text evidence="4 5">Restricts trafficking of FAF2 from the endoplasmic reticulum to lipid droplets (PubMed:23297223). In association with LMBR1L and E3 ubiquitin-protein ligase AMFR, negatively regulates the canonical Wnt signaling pathway in the lymphocytes by promoting the ubiquitin-mediated degradation of CTNNB1 and Wnt receptors FZD6 and LRP6 (PubMed:31073040).</text>
</comment>
<comment type="subunit">
    <text evidence="1 4 9">Interacts with FAF2 (PubMed:23297223). Interacts with LMBR1L (PubMed:31073040). Interacts with AMFR and VCP (By similarity).</text>
</comment>
<comment type="interaction">
    <interactant intactId="EBI-724045">
        <id>Q8NBM4</id>
    </interactant>
    <interactant intactId="EBI-739580">
        <id>Q13137</id>
        <label>CALCOCO2</label>
    </interactant>
    <organismsDiffer>false</organismsDiffer>
    <experiments>3</experiments>
</comment>
<comment type="interaction">
    <interactant intactId="EBI-724045">
        <id>Q8NBM4</id>
    </interactant>
    <interactant intactId="EBI-1055805">
        <id>Q96CS3</id>
        <label>FAF2</label>
    </interactant>
    <organismsDiffer>false</organismsDiffer>
    <experiments>7</experiments>
</comment>
<comment type="interaction">
    <interactant intactId="EBI-25840976">
        <id>Q8NBM4-4</id>
    </interactant>
    <interactant intactId="EBI-25840379">
        <id>Q14203-5</id>
        <label>DCTN1</label>
    </interactant>
    <organismsDiffer>false</organismsDiffer>
    <experiments>3</experiments>
</comment>
<comment type="interaction">
    <interactant intactId="EBI-25840976">
        <id>Q8NBM4-4</id>
    </interactant>
    <interactant intactId="EBI-352682">
        <id>P04792</id>
        <label>HSPB1</label>
    </interactant>
    <organismsDiffer>false</organismsDiffer>
    <experiments>3</experiments>
</comment>
<comment type="interaction">
    <interactant intactId="EBI-25840976">
        <id>Q8NBM4-4</id>
    </interactant>
    <interactant intactId="EBI-10975473">
        <id>O60333-2</id>
        <label>KIF1B</label>
    </interactant>
    <organismsDiffer>false</organismsDiffer>
    <experiments>3</experiments>
</comment>
<comment type="interaction">
    <interactant intactId="EBI-25840976">
        <id>Q8NBM4-4</id>
    </interactant>
    <interactant intactId="EBI-21251460">
        <id>O60260-5</id>
        <label>PRKN</label>
    </interactant>
    <organismsDiffer>false</organismsDiffer>
    <experiments>3</experiments>
</comment>
<comment type="interaction">
    <interactant intactId="EBI-25840976">
        <id>Q8NBM4-4</id>
    </interactant>
    <interactant intactId="EBI-396669">
        <id>Q9Y3C5</id>
        <label>RNF11</label>
    </interactant>
    <organismsDiffer>false</organismsDiffer>
    <experiments>3</experiments>
</comment>
<comment type="interaction">
    <interactant intactId="EBI-25840976">
        <id>Q8NBM4-4</id>
    </interactant>
    <interactant intactId="EBI-720609">
        <id>O76024</id>
        <label>WFS1</label>
    </interactant>
    <organismsDiffer>false</organismsDiffer>
    <experiments>3</experiments>
</comment>
<comment type="subcellular location">
    <subcellularLocation>
        <location evidence="4">Endoplasmic reticulum membrane</location>
        <topology evidence="2">Multi-pass membrane protein</topology>
    </subcellularLocation>
</comment>
<comment type="alternative products">
    <event type="alternative splicing"/>
    <isoform>
        <id>Q8NBM4-1</id>
        <name>1</name>
        <sequence type="displayed"/>
    </isoform>
    <isoform>
        <id>Q8NBM4-2</id>
        <name>2</name>
        <sequence type="described" ref="VSP_023911 VSP_023912"/>
    </isoform>
    <isoform>
        <id>Q8NBM4-3</id>
        <name>3</name>
        <sequence type="described" ref="VSP_023910"/>
    </isoform>
    <isoform>
        <id>Q8NBM4-4</id>
        <name>4</name>
        <sequence type="described" ref="VSP_023909"/>
    </isoform>
    <isoform>
        <id>Q8NBM4-5</id>
        <name>5</name>
        <sequence type="described" ref="VSP_023913 VSP_023914"/>
    </isoform>
</comment>
<comment type="sequence caution" evidence="8">
    <conflict type="erroneous initiation">
        <sequence resource="EMBL-CDS" id="AAH72674"/>
    </conflict>
</comment>
<comment type="sequence caution" evidence="8">
    <conflict type="erroneous initiation">
        <sequence resource="EMBL-CDS" id="AAI21139"/>
    </conflict>
</comment>
<organism>
    <name type="scientific">Homo sapiens</name>
    <name type="common">Human</name>
    <dbReference type="NCBI Taxonomy" id="9606"/>
    <lineage>
        <taxon>Eukaryota</taxon>
        <taxon>Metazoa</taxon>
        <taxon>Chordata</taxon>
        <taxon>Craniata</taxon>
        <taxon>Vertebrata</taxon>
        <taxon>Euteleostomi</taxon>
        <taxon>Mammalia</taxon>
        <taxon>Eutheria</taxon>
        <taxon>Euarchontoglires</taxon>
        <taxon>Primates</taxon>
        <taxon>Haplorrhini</taxon>
        <taxon>Catarrhini</taxon>
        <taxon>Hominidae</taxon>
        <taxon>Homo</taxon>
    </lineage>
</organism>
<accession>Q8NBM4</accession>
<accession>B3KNV7</accession>
<accession>Q0VAB5</accession>
<accession>Q5W0W6</accession>
<accession>Q5W0W9</accession>
<accession>Q6GQR2</accession>
<accession>Q6P4B0</accession>
<accession>Q8N2E8</accession>
<accession>Q96NW2</accession>
<sequence>MFTSTGSSGLYKAPLSKSLLLVPSALSLLLALLLPHCQKLFVYDLHAVKNDFQIWRLICGRIICLDLKDTFCSSLLIYNFRIFERRYGSRKFASFLLGSWVLSALFDFLLIEAMQYFFGITAASNLPSGFLAPVFALFVPFYCSIPRVQVAQILGPLSITNKTLIYILGLQLFTSGSYIWIVAISGLMSGLCYDSKMFQVHQVLCIPSWMAKFFSWTLEPIFSSSEPTSEARIGMGATLDIQRQQRMELLDRQLMFSQFAQGRRQRQQQGGMINWNRLFPPLRQRQNVNYQGGRQSEPAAPPLEVSEEQVARLMEMGFSRGDALEALRASNNDLNVATNFLLQH</sequence>
<gene>
    <name type="primary">UBAC2</name>
    <name type="synonym">PHGDHL1</name>
    <name type="ORF">PSEC0110</name>
</gene>
<keyword id="KW-0025">Alternative splicing</keyword>
<keyword id="KW-0256">Endoplasmic reticulum</keyword>
<keyword id="KW-0325">Glycoprotein</keyword>
<keyword id="KW-0472">Membrane</keyword>
<keyword id="KW-1267">Proteomics identification</keyword>
<keyword id="KW-1185">Reference proteome</keyword>
<keyword id="KW-0732">Signal</keyword>
<keyword id="KW-0812">Transmembrane</keyword>
<keyword id="KW-1133">Transmembrane helix</keyword>
<keyword id="KW-0879">Wnt signaling pathway</keyword>
<feature type="signal peptide" evidence="2">
    <location>
        <begin position="1"/>
        <end position="35"/>
    </location>
</feature>
<feature type="chain" id="PRO_0000280754" description="Ubiquitin-associated domain-containing protein 2">
    <location>
        <begin position="36"/>
        <end position="344"/>
    </location>
</feature>
<feature type="topological domain" description="Extracellular" evidence="2">
    <location>
        <begin position="36"/>
        <end position="91"/>
    </location>
</feature>
<feature type="transmembrane region" description="Helical" evidence="2">
    <location>
        <begin position="92"/>
        <end position="112"/>
    </location>
</feature>
<feature type="topological domain" description="Cytoplasmic" evidence="2">
    <location>
        <begin position="113"/>
        <end position="125"/>
    </location>
</feature>
<feature type="transmembrane region" description="Helical" evidence="2">
    <location>
        <begin position="126"/>
        <end position="146"/>
    </location>
</feature>
<feature type="topological domain" description="Extracellular" evidence="2">
    <location>
        <begin position="147"/>
        <end position="163"/>
    </location>
</feature>
<feature type="transmembrane region" description="Helical" evidence="2">
    <location>
        <begin position="164"/>
        <end position="184"/>
    </location>
</feature>
<feature type="topological domain" description="Cytoplasmic" evidence="2">
    <location>
        <begin position="185"/>
        <end position="344"/>
    </location>
</feature>
<feature type="domain" description="UBA" evidence="3">
    <location>
        <begin position="304"/>
        <end position="344"/>
    </location>
</feature>
<feature type="glycosylation site" description="N-linked (GlcNAc...) asparagine" evidence="2">
    <location>
        <position position="161"/>
    </location>
</feature>
<feature type="splice variant" id="VSP_023909" description="In isoform 4." evidence="6 7">
    <location>
        <begin position="1"/>
        <end position="187"/>
    </location>
</feature>
<feature type="splice variant" id="VSP_023910" description="In isoform 3." evidence="7">
    <location>
        <begin position="1"/>
        <end position="113"/>
    </location>
</feature>
<feature type="splice variant" id="VSP_023911" description="In isoform 2." evidence="6">
    <location>
        <begin position="1"/>
        <end position="35"/>
    </location>
</feature>
<feature type="splice variant" id="VSP_023912" description="In isoform 2." evidence="6">
    <original>HCQKLFVYDLHAVKNDFQIWRLICGRIICLDLKDTFCSSLLIYNFRIFERRYGSRKFASFLLGSWVLSALFDFLLIEAMQYFFGITAASNLPSGF</original>
    <variation>MCFFFSLQEEFLDKHTLMRVLSSGGKLGSRGEGAQLCCWMLLFSWRVSGGQQTRRLCRRAFCWSPVPSPSCSPSSCLTARSSLCMTFTQSRTTSS</variation>
    <location>
        <begin position="36"/>
        <end position="130"/>
    </location>
</feature>
<feature type="splice variant" id="VSP_023913" description="In isoform 5." evidence="8">
    <original>IWRLICGRIICLDLKDTFCSSLLIYNFRIFERRYGSRKFASFLLGSWVLSALFDFLLIEAMQYFFGITAASNLPSGFLAPVFALFVPF</original>
    <variation>PGTCVCSVCTILLLHTKSPSGTNSGSVVHHKQDIDLYIGTAAFHLWFLHLDCSHKWTYVRSVLRQQNVPGASGALHPQLDGKILFLDT</variation>
    <location>
        <begin position="54"/>
        <end position="141"/>
    </location>
</feature>
<feature type="splice variant" id="VSP_023914" description="In isoform 5." evidence="8">
    <location>
        <begin position="142"/>
        <end position="344"/>
    </location>
</feature>
<dbReference type="EMBL" id="AK054563">
    <property type="protein sequence ID" value="BAB70757.1"/>
    <property type="molecule type" value="mRNA"/>
</dbReference>
<dbReference type="EMBL" id="AK055110">
    <property type="protein sequence ID" value="BAG51469.1"/>
    <property type="molecule type" value="mRNA"/>
</dbReference>
<dbReference type="EMBL" id="AK075419">
    <property type="protein sequence ID" value="BAC11609.1"/>
    <property type="molecule type" value="mRNA"/>
</dbReference>
<dbReference type="EMBL" id="AK075516">
    <property type="protein sequence ID" value="BAC11665.1"/>
    <property type="molecule type" value="mRNA"/>
</dbReference>
<dbReference type="EMBL" id="AL136961">
    <property type="status" value="NOT_ANNOTATED_CDS"/>
    <property type="molecule type" value="Genomic_DNA"/>
</dbReference>
<dbReference type="EMBL" id="AL159981">
    <property type="status" value="NOT_ANNOTATED_CDS"/>
    <property type="molecule type" value="Genomic_DNA"/>
</dbReference>
<dbReference type="EMBL" id="AL160155">
    <property type="status" value="NOT_ANNOTATED_CDS"/>
    <property type="molecule type" value="Genomic_DNA"/>
</dbReference>
<dbReference type="EMBL" id="BC063559">
    <property type="protein sequence ID" value="AAH63559.1"/>
    <property type="molecule type" value="mRNA"/>
</dbReference>
<dbReference type="EMBL" id="BC072674">
    <property type="protein sequence ID" value="AAH72674.1"/>
    <property type="status" value="ALT_INIT"/>
    <property type="molecule type" value="mRNA"/>
</dbReference>
<dbReference type="EMBL" id="BC121138">
    <property type="protein sequence ID" value="AAI21139.1"/>
    <property type="status" value="ALT_INIT"/>
    <property type="molecule type" value="mRNA"/>
</dbReference>
<dbReference type="EMBL" id="BC121139">
    <property type="protein sequence ID" value="AAI21140.1"/>
    <property type="molecule type" value="mRNA"/>
</dbReference>
<dbReference type="CCDS" id="CCDS45064.1">
    <molecule id="Q8NBM4-1"/>
</dbReference>
<dbReference type="CCDS" id="CCDS9490.1">
    <molecule id="Q8NBM4-2"/>
</dbReference>
<dbReference type="RefSeq" id="NP_001137544.1">
    <molecule id="Q8NBM4-1"/>
    <property type="nucleotide sequence ID" value="NM_001144072.2"/>
</dbReference>
<dbReference type="RefSeq" id="NP_808882.1">
    <molecule id="Q8NBM4-2"/>
    <property type="nucleotide sequence ID" value="NM_177967.4"/>
</dbReference>
<dbReference type="RefSeq" id="XP_006720011.1">
    <property type="nucleotide sequence ID" value="XM_006719948.3"/>
</dbReference>
<dbReference type="RefSeq" id="XP_011519386.1">
    <property type="nucleotide sequence ID" value="XM_011521084.2"/>
</dbReference>
<dbReference type="RefSeq" id="XP_047286242.1">
    <molecule id="Q8NBM4-3"/>
    <property type="nucleotide sequence ID" value="XM_047430286.1"/>
</dbReference>
<dbReference type="RefSeq" id="XP_054230464.1">
    <molecule id="Q8NBM4-3"/>
    <property type="nucleotide sequence ID" value="XM_054374489.1"/>
</dbReference>
<dbReference type="SMR" id="Q8NBM4"/>
<dbReference type="BioGRID" id="130617">
    <property type="interactions" value="222"/>
</dbReference>
<dbReference type="FunCoup" id="Q8NBM4">
    <property type="interactions" value="1490"/>
</dbReference>
<dbReference type="IntAct" id="Q8NBM4">
    <property type="interactions" value="126"/>
</dbReference>
<dbReference type="MINT" id="Q8NBM4"/>
<dbReference type="STRING" id="9606.ENSP00000383911"/>
<dbReference type="GlyCosmos" id="Q8NBM4">
    <property type="glycosylation" value="1 site, No reported glycans"/>
</dbReference>
<dbReference type="GlyGen" id="Q8NBM4">
    <property type="glycosylation" value="2 sites, 1 O-linked glycan (1 site)"/>
</dbReference>
<dbReference type="iPTMnet" id="Q8NBM4"/>
<dbReference type="PhosphoSitePlus" id="Q8NBM4"/>
<dbReference type="SwissPalm" id="Q8NBM4"/>
<dbReference type="BioMuta" id="UBAC2"/>
<dbReference type="DMDM" id="74751173"/>
<dbReference type="jPOST" id="Q8NBM4"/>
<dbReference type="MassIVE" id="Q8NBM4"/>
<dbReference type="PaxDb" id="9606-ENSP00000383911"/>
<dbReference type="PeptideAtlas" id="Q8NBM4"/>
<dbReference type="ProteomicsDB" id="72792">
    <molecule id="Q8NBM4-1"/>
</dbReference>
<dbReference type="ProteomicsDB" id="72793">
    <molecule id="Q8NBM4-2"/>
</dbReference>
<dbReference type="ProteomicsDB" id="72794">
    <molecule id="Q8NBM4-3"/>
</dbReference>
<dbReference type="ProteomicsDB" id="72795">
    <molecule id="Q8NBM4-4"/>
</dbReference>
<dbReference type="ProteomicsDB" id="72796">
    <molecule id="Q8NBM4-5"/>
</dbReference>
<dbReference type="Pumba" id="Q8NBM4"/>
<dbReference type="Antibodypedia" id="10857">
    <property type="antibodies" value="99 antibodies from 20 providers"/>
</dbReference>
<dbReference type="DNASU" id="337867"/>
<dbReference type="Ensembl" id="ENST00000376440.6">
    <molecule id="Q8NBM4-2"/>
    <property type="protein sequence ID" value="ENSP00000365623.2"/>
    <property type="gene ID" value="ENSG00000134882.16"/>
</dbReference>
<dbReference type="Ensembl" id="ENST00000403766.8">
    <molecule id="Q8NBM4-1"/>
    <property type="protein sequence ID" value="ENSP00000383911.3"/>
    <property type="gene ID" value="ENSG00000134882.16"/>
</dbReference>
<dbReference type="GeneID" id="337867"/>
<dbReference type="KEGG" id="hsa:337867"/>
<dbReference type="MANE-Select" id="ENST00000403766.8">
    <property type="protein sequence ID" value="ENSP00000383911.3"/>
    <property type="RefSeq nucleotide sequence ID" value="NM_001144072.2"/>
    <property type="RefSeq protein sequence ID" value="NP_001137544.1"/>
</dbReference>
<dbReference type="UCSC" id="uc001voa.5">
    <molecule id="Q8NBM4-1"/>
    <property type="organism name" value="human"/>
</dbReference>
<dbReference type="AGR" id="HGNC:20486"/>
<dbReference type="CTD" id="337867"/>
<dbReference type="DisGeNET" id="337867"/>
<dbReference type="GeneCards" id="UBAC2"/>
<dbReference type="HGNC" id="HGNC:20486">
    <property type="gene designation" value="UBAC2"/>
</dbReference>
<dbReference type="HPA" id="ENSG00000134882">
    <property type="expression patterns" value="Low tissue specificity"/>
</dbReference>
<dbReference type="MalaCards" id="UBAC2"/>
<dbReference type="neXtProt" id="NX_Q8NBM4"/>
<dbReference type="OpenTargets" id="ENSG00000134882"/>
<dbReference type="Orphanet" id="117">
    <property type="disease" value="Behcet disease"/>
</dbReference>
<dbReference type="PharmGKB" id="PA162407839"/>
<dbReference type="VEuPathDB" id="HostDB:ENSG00000134882"/>
<dbReference type="eggNOG" id="KOG4463">
    <property type="taxonomic scope" value="Eukaryota"/>
</dbReference>
<dbReference type="GeneTree" id="ENSGT00950000182999"/>
<dbReference type="HOGENOM" id="CLU_057710_0_0_1"/>
<dbReference type="InParanoid" id="Q8NBM4"/>
<dbReference type="OMA" id="NYQDHRP"/>
<dbReference type="OrthoDB" id="272778at2759"/>
<dbReference type="PAN-GO" id="Q8NBM4">
    <property type="GO annotations" value="0 GO annotations based on evolutionary models"/>
</dbReference>
<dbReference type="PhylomeDB" id="Q8NBM4"/>
<dbReference type="TreeFam" id="TF333335"/>
<dbReference type="PathwayCommons" id="Q8NBM4"/>
<dbReference type="SignaLink" id="Q8NBM4"/>
<dbReference type="BioGRID-ORCS" id="337867">
    <property type="hits" value="17 hits in 1154 CRISPR screens"/>
</dbReference>
<dbReference type="ChiTaRS" id="UBAC2">
    <property type="organism name" value="human"/>
</dbReference>
<dbReference type="GenomeRNAi" id="337867"/>
<dbReference type="Pharos" id="Q8NBM4">
    <property type="development level" value="Tbio"/>
</dbReference>
<dbReference type="PRO" id="PR:Q8NBM4"/>
<dbReference type="Proteomes" id="UP000005640">
    <property type="component" value="Chromosome 13"/>
</dbReference>
<dbReference type="RNAct" id="Q8NBM4">
    <property type="molecule type" value="protein"/>
</dbReference>
<dbReference type="Bgee" id="ENSG00000134882">
    <property type="expression patterns" value="Expressed in lower esophagus mucosa and 171 other cell types or tissues"/>
</dbReference>
<dbReference type="ExpressionAtlas" id="Q8NBM4">
    <property type="expression patterns" value="baseline and differential"/>
</dbReference>
<dbReference type="GO" id="GO:0005783">
    <property type="term" value="C:endoplasmic reticulum"/>
    <property type="evidence" value="ECO:0000314"/>
    <property type="project" value="MGI"/>
</dbReference>
<dbReference type="GO" id="GO:0005789">
    <property type="term" value="C:endoplasmic reticulum membrane"/>
    <property type="evidence" value="ECO:0007669"/>
    <property type="project" value="UniProtKB-SubCell"/>
</dbReference>
<dbReference type="GO" id="GO:0004252">
    <property type="term" value="F:serine-type endopeptidase activity"/>
    <property type="evidence" value="ECO:0000318"/>
    <property type="project" value="GO_Central"/>
</dbReference>
<dbReference type="GO" id="GO:0090090">
    <property type="term" value="P:negative regulation of canonical Wnt signaling pathway"/>
    <property type="evidence" value="ECO:0000315"/>
    <property type="project" value="UniProtKB"/>
</dbReference>
<dbReference type="GO" id="GO:1904153">
    <property type="term" value="P:negative regulation of retrograde protein transport, ER to cytosol"/>
    <property type="evidence" value="ECO:0000315"/>
    <property type="project" value="ParkinsonsUK-UCL"/>
</dbReference>
<dbReference type="GO" id="GO:0070972">
    <property type="term" value="P:protein localization to endoplasmic reticulum"/>
    <property type="evidence" value="ECO:0000314"/>
    <property type="project" value="MGI"/>
</dbReference>
<dbReference type="GO" id="GO:0016055">
    <property type="term" value="P:Wnt signaling pathway"/>
    <property type="evidence" value="ECO:0007669"/>
    <property type="project" value="UniProtKB-KW"/>
</dbReference>
<dbReference type="CDD" id="cd14305">
    <property type="entry name" value="UBA_UBAC2"/>
    <property type="match status" value="1"/>
</dbReference>
<dbReference type="FunFam" id="1.20.1540.10:FF:000021">
    <property type="entry name" value="UBA domain containing 2"/>
    <property type="match status" value="1"/>
</dbReference>
<dbReference type="FunFam" id="1.10.8.10:FF:000074">
    <property type="entry name" value="Ubiquitin-associated domain-containing protein 2"/>
    <property type="match status" value="1"/>
</dbReference>
<dbReference type="Gene3D" id="1.10.8.10">
    <property type="entry name" value="DNA helicase RuvA subunit, C-terminal domain"/>
    <property type="match status" value="1"/>
</dbReference>
<dbReference type="Gene3D" id="1.20.1540.10">
    <property type="entry name" value="Rhomboid-like"/>
    <property type="match status" value="1"/>
</dbReference>
<dbReference type="InterPro" id="IPR035952">
    <property type="entry name" value="Rhomboid-like_sf"/>
</dbReference>
<dbReference type="InterPro" id="IPR015940">
    <property type="entry name" value="UBA"/>
</dbReference>
<dbReference type="InterPro" id="IPR009060">
    <property type="entry name" value="UBA-like_sf"/>
</dbReference>
<dbReference type="InterPro" id="IPR041928">
    <property type="entry name" value="UBA_UBAC2"/>
</dbReference>
<dbReference type="PANTHER" id="PTHR43066">
    <property type="entry name" value="RHOMBOID-RELATED PROTEIN"/>
    <property type="match status" value="1"/>
</dbReference>
<dbReference type="PANTHER" id="PTHR43066:SF21">
    <property type="entry name" value="UBIQUITIN-ASSOCIATED DOMAIN-CONTAINING PROTEIN 2"/>
    <property type="match status" value="1"/>
</dbReference>
<dbReference type="Pfam" id="PF00627">
    <property type="entry name" value="UBA"/>
    <property type="match status" value="1"/>
</dbReference>
<dbReference type="SMART" id="SM00165">
    <property type="entry name" value="UBA"/>
    <property type="match status" value="1"/>
</dbReference>
<dbReference type="SUPFAM" id="SSF144091">
    <property type="entry name" value="Rhomboid-like"/>
    <property type="match status" value="1"/>
</dbReference>
<dbReference type="SUPFAM" id="SSF46934">
    <property type="entry name" value="UBA-like"/>
    <property type="match status" value="1"/>
</dbReference>
<dbReference type="PROSITE" id="PS50030">
    <property type="entry name" value="UBA"/>
    <property type="match status" value="1"/>
</dbReference>
<proteinExistence type="evidence at protein level"/>
<reference key="1">
    <citation type="journal article" date="2004" name="Nat. Genet.">
        <title>Complete sequencing and characterization of 21,243 full-length human cDNAs.</title>
        <authorList>
            <person name="Ota T."/>
            <person name="Suzuki Y."/>
            <person name="Nishikawa T."/>
            <person name="Otsuki T."/>
            <person name="Sugiyama T."/>
            <person name="Irie R."/>
            <person name="Wakamatsu A."/>
            <person name="Hayashi K."/>
            <person name="Sato H."/>
            <person name="Nagai K."/>
            <person name="Kimura K."/>
            <person name="Makita H."/>
            <person name="Sekine M."/>
            <person name="Obayashi M."/>
            <person name="Nishi T."/>
            <person name="Shibahara T."/>
            <person name="Tanaka T."/>
            <person name="Ishii S."/>
            <person name="Yamamoto J."/>
            <person name="Saito K."/>
            <person name="Kawai Y."/>
            <person name="Isono Y."/>
            <person name="Nakamura Y."/>
            <person name="Nagahari K."/>
            <person name="Murakami K."/>
            <person name="Yasuda T."/>
            <person name="Iwayanagi T."/>
            <person name="Wagatsuma M."/>
            <person name="Shiratori A."/>
            <person name="Sudo H."/>
            <person name="Hosoiri T."/>
            <person name="Kaku Y."/>
            <person name="Kodaira H."/>
            <person name="Kondo H."/>
            <person name="Sugawara M."/>
            <person name="Takahashi M."/>
            <person name="Kanda K."/>
            <person name="Yokoi T."/>
            <person name="Furuya T."/>
            <person name="Kikkawa E."/>
            <person name="Omura Y."/>
            <person name="Abe K."/>
            <person name="Kamihara K."/>
            <person name="Katsuta N."/>
            <person name="Sato K."/>
            <person name="Tanikawa M."/>
            <person name="Yamazaki M."/>
            <person name="Ninomiya K."/>
            <person name="Ishibashi T."/>
            <person name="Yamashita H."/>
            <person name="Murakawa K."/>
            <person name="Fujimori K."/>
            <person name="Tanai H."/>
            <person name="Kimata M."/>
            <person name="Watanabe M."/>
            <person name="Hiraoka S."/>
            <person name="Chiba Y."/>
            <person name="Ishida S."/>
            <person name="Ono Y."/>
            <person name="Takiguchi S."/>
            <person name="Watanabe S."/>
            <person name="Yosida M."/>
            <person name="Hotuta T."/>
            <person name="Kusano J."/>
            <person name="Kanehori K."/>
            <person name="Takahashi-Fujii A."/>
            <person name="Hara H."/>
            <person name="Tanase T.-O."/>
            <person name="Nomura Y."/>
            <person name="Togiya S."/>
            <person name="Komai F."/>
            <person name="Hara R."/>
            <person name="Takeuchi K."/>
            <person name="Arita M."/>
            <person name="Imose N."/>
            <person name="Musashino K."/>
            <person name="Yuuki H."/>
            <person name="Oshima A."/>
            <person name="Sasaki N."/>
            <person name="Aotsuka S."/>
            <person name="Yoshikawa Y."/>
            <person name="Matsunawa H."/>
            <person name="Ichihara T."/>
            <person name="Shiohata N."/>
            <person name="Sano S."/>
            <person name="Moriya S."/>
            <person name="Momiyama H."/>
            <person name="Satoh N."/>
            <person name="Takami S."/>
            <person name="Terashima Y."/>
            <person name="Suzuki O."/>
            <person name="Nakagawa S."/>
            <person name="Senoh A."/>
            <person name="Mizoguchi H."/>
            <person name="Goto Y."/>
            <person name="Shimizu F."/>
            <person name="Wakebe H."/>
            <person name="Hishigaki H."/>
            <person name="Watanabe T."/>
            <person name="Sugiyama A."/>
            <person name="Takemoto M."/>
            <person name="Kawakami B."/>
            <person name="Yamazaki M."/>
            <person name="Watanabe K."/>
            <person name="Kumagai A."/>
            <person name="Itakura S."/>
            <person name="Fukuzumi Y."/>
            <person name="Fujimori Y."/>
            <person name="Komiyama M."/>
            <person name="Tashiro H."/>
            <person name="Tanigami A."/>
            <person name="Fujiwara T."/>
            <person name="Ono T."/>
            <person name="Yamada K."/>
            <person name="Fujii Y."/>
            <person name="Ozaki K."/>
            <person name="Hirao M."/>
            <person name="Ohmori Y."/>
            <person name="Kawabata A."/>
            <person name="Hikiji T."/>
            <person name="Kobatake N."/>
            <person name="Inagaki H."/>
            <person name="Ikema Y."/>
            <person name="Okamoto S."/>
            <person name="Okitani R."/>
            <person name="Kawakami T."/>
            <person name="Noguchi S."/>
            <person name="Itoh T."/>
            <person name="Shigeta K."/>
            <person name="Senba T."/>
            <person name="Matsumura K."/>
            <person name="Nakajima Y."/>
            <person name="Mizuno T."/>
            <person name="Morinaga M."/>
            <person name="Sasaki M."/>
            <person name="Togashi T."/>
            <person name="Oyama M."/>
            <person name="Hata H."/>
            <person name="Watanabe M."/>
            <person name="Komatsu T."/>
            <person name="Mizushima-Sugano J."/>
            <person name="Satoh T."/>
            <person name="Shirai Y."/>
            <person name="Takahashi Y."/>
            <person name="Nakagawa K."/>
            <person name="Okumura K."/>
            <person name="Nagase T."/>
            <person name="Nomura N."/>
            <person name="Kikuchi H."/>
            <person name="Masuho Y."/>
            <person name="Yamashita R."/>
            <person name="Nakai K."/>
            <person name="Yada T."/>
            <person name="Nakamura Y."/>
            <person name="Ohara O."/>
            <person name="Isogai T."/>
            <person name="Sugano S."/>
        </authorList>
    </citation>
    <scope>NUCLEOTIDE SEQUENCE [LARGE SCALE MRNA] (ISOFORMS 2 AND 4)</scope>
    <source>
        <tissue>Brain</tissue>
    </source>
</reference>
<reference key="2">
    <citation type="journal article" date="2005" name="DNA Res.">
        <title>Signal sequence and keyword trap in silico for selection of full-length human cDNAs encoding secretion or membrane proteins from oligo-capped cDNA libraries.</title>
        <authorList>
            <person name="Otsuki T."/>
            <person name="Ota T."/>
            <person name="Nishikawa T."/>
            <person name="Hayashi K."/>
            <person name="Suzuki Y."/>
            <person name="Yamamoto J."/>
            <person name="Wakamatsu A."/>
            <person name="Kimura K."/>
            <person name="Sakamoto K."/>
            <person name="Hatano N."/>
            <person name="Kawai Y."/>
            <person name="Ishii S."/>
            <person name="Saito K."/>
            <person name="Kojima S."/>
            <person name="Sugiyama T."/>
            <person name="Ono T."/>
            <person name="Okano K."/>
            <person name="Yoshikawa Y."/>
            <person name="Aotsuka S."/>
            <person name="Sasaki N."/>
            <person name="Hattori A."/>
            <person name="Okumura K."/>
            <person name="Nagai K."/>
            <person name="Sugano S."/>
            <person name="Isogai T."/>
        </authorList>
    </citation>
    <scope>NUCLEOTIDE SEQUENCE [LARGE SCALE MRNA] (ISOFORM 1)</scope>
    <source>
        <tissue>Embryo</tissue>
        <tissue>Placenta</tissue>
    </source>
</reference>
<reference key="3">
    <citation type="journal article" date="2004" name="Nature">
        <title>The DNA sequence and analysis of human chromosome 13.</title>
        <authorList>
            <person name="Dunham A."/>
            <person name="Matthews L.H."/>
            <person name="Burton J."/>
            <person name="Ashurst J.L."/>
            <person name="Howe K.L."/>
            <person name="Ashcroft K.J."/>
            <person name="Beare D.M."/>
            <person name="Burford D.C."/>
            <person name="Hunt S.E."/>
            <person name="Griffiths-Jones S."/>
            <person name="Jones M.C."/>
            <person name="Keenan S.J."/>
            <person name="Oliver K."/>
            <person name="Scott C.E."/>
            <person name="Ainscough R."/>
            <person name="Almeida J.P."/>
            <person name="Ambrose K.D."/>
            <person name="Andrews D.T."/>
            <person name="Ashwell R.I.S."/>
            <person name="Babbage A.K."/>
            <person name="Bagguley C.L."/>
            <person name="Bailey J."/>
            <person name="Bannerjee R."/>
            <person name="Barlow K.F."/>
            <person name="Bates K."/>
            <person name="Beasley H."/>
            <person name="Bird C.P."/>
            <person name="Bray-Allen S."/>
            <person name="Brown A.J."/>
            <person name="Brown J.Y."/>
            <person name="Burrill W."/>
            <person name="Carder C."/>
            <person name="Carter N.P."/>
            <person name="Chapman J.C."/>
            <person name="Clamp M.E."/>
            <person name="Clark S.Y."/>
            <person name="Clarke G."/>
            <person name="Clee C.M."/>
            <person name="Clegg S.C."/>
            <person name="Cobley V."/>
            <person name="Collins J.E."/>
            <person name="Corby N."/>
            <person name="Coville G.J."/>
            <person name="Deloukas P."/>
            <person name="Dhami P."/>
            <person name="Dunham I."/>
            <person name="Dunn M."/>
            <person name="Earthrowl M.E."/>
            <person name="Ellington A.G."/>
            <person name="Faulkner L."/>
            <person name="Frankish A.G."/>
            <person name="Frankland J."/>
            <person name="French L."/>
            <person name="Garner P."/>
            <person name="Garnett J."/>
            <person name="Gilbert J.G.R."/>
            <person name="Gilson C.J."/>
            <person name="Ghori J."/>
            <person name="Grafham D.V."/>
            <person name="Gribble S.M."/>
            <person name="Griffiths C."/>
            <person name="Hall R.E."/>
            <person name="Hammond S."/>
            <person name="Harley J.L."/>
            <person name="Hart E.A."/>
            <person name="Heath P.D."/>
            <person name="Howden P.J."/>
            <person name="Huckle E.J."/>
            <person name="Hunt P.J."/>
            <person name="Hunt A.R."/>
            <person name="Johnson C."/>
            <person name="Johnson D."/>
            <person name="Kay M."/>
            <person name="Kimberley A.M."/>
            <person name="King A."/>
            <person name="Laird G.K."/>
            <person name="Langford C.J."/>
            <person name="Lawlor S."/>
            <person name="Leongamornlert D.A."/>
            <person name="Lloyd D.M."/>
            <person name="Lloyd C."/>
            <person name="Loveland J.E."/>
            <person name="Lovell J."/>
            <person name="Martin S."/>
            <person name="Mashreghi-Mohammadi M."/>
            <person name="McLaren S.J."/>
            <person name="McMurray A."/>
            <person name="Milne S."/>
            <person name="Moore M.J.F."/>
            <person name="Nickerson T."/>
            <person name="Palmer S.A."/>
            <person name="Pearce A.V."/>
            <person name="Peck A.I."/>
            <person name="Pelan S."/>
            <person name="Phillimore B."/>
            <person name="Porter K.M."/>
            <person name="Rice C.M."/>
            <person name="Searle S."/>
            <person name="Sehra H.K."/>
            <person name="Shownkeen R."/>
            <person name="Skuce C.D."/>
            <person name="Smith M."/>
            <person name="Steward C.A."/>
            <person name="Sycamore N."/>
            <person name="Tester J."/>
            <person name="Thomas D.W."/>
            <person name="Tracey A."/>
            <person name="Tromans A."/>
            <person name="Tubby B."/>
            <person name="Wall M."/>
            <person name="Wallis J.M."/>
            <person name="West A.P."/>
            <person name="Whitehead S.L."/>
            <person name="Willey D.L."/>
            <person name="Wilming L."/>
            <person name="Wray P.W."/>
            <person name="Wright M.W."/>
            <person name="Young L."/>
            <person name="Coulson A."/>
            <person name="Durbin R.M."/>
            <person name="Hubbard T."/>
            <person name="Sulston J.E."/>
            <person name="Beck S."/>
            <person name="Bentley D.R."/>
            <person name="Rogers J."/>
            <person name="Ross M.T."/>
        </authorList>
    </citation>
    <scope>NUCLEOTIDE SEQUENCE [LARGE SCALE GENOMIC DNA]</scope>
</reference>
<reference key="4">
    <citation type="journal article" date="2004" name="Genome Res.">
        <title>The status, quality, and expansion of the NIH full-length cDNA project: the Mammalian Gene Collection (MGC).</title>
        <authorList>
            <consortium name="The MGC Project Team"/>
        </authorList>
    </citation>
    <scope>NUCLEOTIDE SEQUENCE [LARGE SCALE MRNA] (ISOFORMS 3 AND 4)</scope>
    <scope>NUCLEOTIDE SEQUENCE [LARGE SCALE MRNA] OF 54-344 (ISOFORM 1)</scope>
    <source>
        <tissue>Blood</tissue>
        <tissue>Placenta</tissue>
    </source>
</reference>
<reference key="5">
    <citation type="journal article" date="2013" name="Proc. Natl. Acad. Sci. U.S.A.">
        <title>Spatial regulation of UBXD8 and p97/VCP controls ATGL-mediated lipid droplet turnover.</title>
        <authorList>
            <person name="Olzmann J.A."/>
            <person name="Richter C.M."/>
            <person name="Kopito R.R."/>
        </authorList>
    </citation>
    <scope>FUNCTION</scope>
    <scope>INTERACTION WITH FAF2</scope>
    <scope>SUBCELLULAR LOCATION</scope>
</reference>
<reference key="6">
    <citation type="journal article" date="2019" name="Science">
        <title>LMBR1L regulates lymphopoiesis through Wnt/beta-catenin signaling.</title>
        <authorList>
            <person name="Choi J.H."/>
            <person name="Zhong X."/>
            <person name="McAlpine W."/>
            <person name="Liao T.C."/>
            <person name="Zhang D."/>
            <person name="Fang B."/>
            <person name="Russell J."/>
            <person name="Ludwig S."/>
            <person name="Nair-Gill E."/>
            <person name="Zhang Z."/>
            <person name="Wang K.W."/>
            <person name="Misawa T."/>
            <person name="Zhan X."/>
            <person name="Choi M."/>
            <person name="Wang T."/>
            <person name="Li X."/>
            <person name="Tang M."/>
            <person name="Sun Q."/>
            <person name="Yu L."/>
            <person name="Murray A.R."/>
            <person name="Moresco E.M.Y."/>
            <person name="Beutler B."/>
        </authorList>
    </citation>
    <scope>FUNCTION</scope>
    <scope>INTERACTION WITH LMBR1L</scope>
</reference>
<name>UBAC2_HUMAN</name>
<protein>
    <recommendedName>
        <fullName>Ubiquitin-associated domain-containing protein 2</fullName>
        <shortName>UBA domain-containing protein 2</shortName>
    </recommendedName>
    <alternativeName>
        <fullName>Phosphoglycerate dehydrogenase-like protein 1</fullName>
    </alternativeName>
</protein>
<evidence type="ECO:0000250" key="1">
    <source>
        <dbReference type="UniProtKB" id="Q8R1K1"/>
    </source>
</evidence>
<evidence type="ECO:0000255" key="2"/>
<evidence type="ECO:0000255" key="3">
    <source>
        <dbReference type="PROSITE-ProRule" id="PRU00212"/>
    </source>
</evidence>
<evidence type="ECO:0000269" key="4">
    <source>
    </source>
</evidence>
<evidence type="ECO:0000269" key="5">
    <source>
    </source>
</evidence>
<evidence type="ECO:0000303" key="6">
    <source>
    </source>
</evidence>
<evidence type="ECO:0000303" key="7">
    <source>
    </source>
</evidence>
<evidence type="ECO:0000305" key="8"/>
<evidence type="ECO:0000305" key="9">
    <source>
    </source>
</evidence>